<evidence type="ECO:0000255" key="1">
    <source>
        <dbReference type="HAMAP-Rule" id="MF_00050"/>
    </source>
</evidence>
<sequence>MAEITAALVKELREKTDAPMMECKKALTEAEGDLARAEEILRVKLGNKASKAASRVTAEGLIGLFIAADGKQGAVIEVNCETDFVAKNPDFIDFVNKLAGLVAAQNPADVAALSELAFGEGTVETTRTALVGKIGENISIRRFQRIATPNALASYVHGGRIGVLVEFAGAEEVGKDLAMHIAATKPKALNADGVAAADIAAERSVAEQKAAESGKPADIAAKMVEGSVQKFLKEVTLLSQPFVKNDKQTVEQMLKEKGASISQFVLYVVGEGIEKKTTDFAAEVAAAAAGHA</sequence>
<organism>
    <name type="scientific">Bordetella avium (strain 197N)</name>
    <dbReference type="NCBI Taxonomy" id="360910"/>
    <lineage>
        <taxon>Bacteria</taxon>
        <taxon>Pseudomonadati</taxon>
        <taxon>Pseudomonadota</taxon>
        <taxon>Betaproteobacteria</taxon>
        <taxon>Burkholderiales</taxon>
        <taxon>Alcaligenaceae</taxon>
        <taxon>Bordetella</taxon>
    </lineage>
</organism>
<dbReference type="EMBL" id="AM167904">
    <property type="protein sequence ID" value="CAJ49343.1"/>
    <property type="molecule type" value="Genomic_DNA"/>
</dbReference>
<dbReference type="RefSeq" id="WP_012417404.1">
    <property type="nucleotide sequence ID" value="NC_010645.1"/>
</dbReference>
<dbReference type="SMR" id="Q2L161"/>
<dbReference type="STRING" id="360910.BAV1735"/>
<dbReference type="GeneID" id="92935204"/>
<dbReference type="KEGG" id="bav:BAV1735"/>
<dbReference type="eggNOG" id="COG0264">
    <property type="taxonomic scope" value="Bacteria"/>
</dbReference>
<dbReference type="HOGENOM" id="CLU_047155_0_2_4"/>
<dbReference type="OrthoDB" id="9808348at2"/>
<dbReference type="Proteomes" id="UP000001977">
    <property type="component" value="Chromosome"/>
</dbReference>
<dbReference type="GO" id="GO:0005737">
    <property type="term" value="C:cytoplasm"/>
    <property type="evidence" value="ECO:0007669"/>
    <property type="project" value="UniProtKB-SubCell"/>
</dbReference>
<dbReference type="GO" id="GO:0003746">
    <property type="term" value="F:translation elongation factor activity"/>
    <property type="evidence" value="ECO:0007669"/>
    <property type="project" value="UniProtKB-UniRule"/>
</dbReference>
<dbReference type="CDD" id="cd14275">
    <property type="entry name" value="UBA_EF-Ts"/>
    <property type="match status" value="1"/>
</dbReference>
<dbReference type="FunFam" id="1.10.286.20:FF:000001">
    <property type="entry name" value="Elongation factor Ts"/>
    <property type="match status" value="1"/>
</dbReference>
<dbReference type="FunFam" id="1.10.8.10:FF:000001">
    <property type="entry name" value="Elongation factor Ts"/>
    <property type="match status" value="1"/>
</dbReference>
<dbReference type="Gene3D" id="1.10.286.20">
    <property type="match status" value="1"/>
</dbReference>
<dbReference type="Gene3D" id="1.10.8.10">
    <property type="entry name" value="DNA helicase RuvA subunit, C-terminal domain"/>
    <property type="match status" value="1"/>
</dbReference>
<dbReference type="Gene3D" id="3.30.479.20">
    <property type="entry name" value="Elongation factor Ts, dimerisation domain"/>
    <property type="match status" value="2"/>
</dbReference>
<dbReference type="HAMAP" id="MF_00050">
    <property type="entry name" value="EF_Ts"/>
    <property type="match status" value="1"/>
</dbReference>
<dbReference type="InterPro" id="IPR036402">
    <property type="entry name" value="EF-Ts_dimer_sf"/>
</dbReference>
<dbReference type="InterPro" id="IPR001816">
    <property type="entry name" value="Transl_elong_EFTs/EF1B"/>
</dbReference>
<dbReference type="InterPro" id="IPR014039">
    <property type="entry name" value="Transl_elong_EFTs/EF1B_dimer"/>
</dbReference>
<dbReference type="InterPro" id="IPR018101">
    <property type="entry name" value="Transl_elong_Ts_CS"/>
</dbReference>
<dbReference type="InterPro" id="IPR009060">
    <property type="entry name" value="UBA-like_sf"/>
</dbReference>
<dbReference type="NCBIfam" id="TIGR00116">
    <property type="entry name" value="tsf"/>
    <property type="match status" value="1"/>
</dbReference>
<dbReference type="PANTHER" id="PTHR11741">
    <property type="entry name" value="ELONGATION FACTOR TS"/>
    <property type="match status" value="1"/>
</dbReference>
<dbReference type="PANTHER" id="PTHR11741:SF0">
    <property type="entry name" value="ELONGATION FACTOR TS, MITOCHONDRIAL"/>
    <property type="match status" value="1"/>
</dbReference>
<dbReference type="Pfam" id="PF00889">
    <property type="entry name" value="EF_TS"/>
    <property type="match status" value="1"/>
</dbReference>
<dbReference type="SUPFAM" id="SSF54713">
    <property type="entry name" value="Elongation factor Ts (EF-Ts), dimerisation domain"/>
    <property type="match status" value="2"/>
</dbReference>
<dbReference type="SUPFAM" id="SSF46934">
    <property type="entry name" value="UBA-like"/>
    <property type="match status" value="1"/>
</dbReference>
<dbReference type="PROSITE" id="PS01127">
    <property type="entry name" value="EF_TS_2"/>
    <property type="match status" value="1"/>
</dbReference>
<protein>
    <recommendedName>
        <fullName evidence="1">Elongation factor Ts</fullName>
        <shortName evidence="1">EF-Ts</shortName>
    </recommendedName>
</protein>
<comment type="function">
    <text evidence="1">Associates with the EF-Tu.GDP complex and induces the exchange of GDP to GTP. It remains bound to the aminoacyl-tRNA.EF-Tu.GTP complex up to the GTP hydrolysis stage on the ribosome.</text>
</comment>
<comment type="subcellular location">
    <subcellularLocation>
        <location evidence="1">Cytoplasm</location>
    </subcellularLocation>
</comment>
<comment type="similarity">
    <text evidence="1">Belongs to the EF-Ts family.</text>
</comment>
<feature type="chain" id="PRO_0000241464" description="Elongation factor Ts">
    <location>
        <begin position="1"/>
        <end position="292"/>
    </location>
</feature>
<feature type="region of interest" description="Involved in Mg(2+) ion dislocation from EF-Tu" evidence="1">
    <location>
        <begin position="82"/>
        <end position="85"/>
    </location>
</feature>
<keyword id="KW-0963">Cytoplasm</keyword>
<keyword id="KW-0251">Elongation factor</keyword>
<keyword id="KW-0648">Protein biosynthesis</keyword>
<keyword id="KW-1185">Reference proteome</keyword>
<gene>
    <name evidence="1" type="primary">tsf</name>
    <name type="ordered locus">BAV1735</name>
</gene>
<accession>Q2L161</accession>
<reference key="1">
    <citation type="journal article" date="2006" name="J. Bacteriol.">
        <title>Comparison of the genome sequence of the poultry pathogen Bordetella avium with those of B. bronchiseptica, B. pertussis, and B. parapertussis reveals extensive diversity in surface structures associated with host interaction.</title>
        <authorList>
            <person name="Sebaihia M."/>
            <person name="Preston A."/>
            <person name="Maskell D.J."/>
            <person name="Kuzmiak H."/>
            <person name="Connell T.D."/>
            <person name="King N.D."/>
            <person name="Orndorff P.E."/>
            <person name="Miyamoto D.M."/>
            <person name="Thomson N.R."/>
            <person name="Harris D."/>
            <person name="Goble A."/>
            <person name="Lord A."/>
            <person name="Murphy L."/>
            <person name="Quail M.A."/>
            <person name="Rutter S."/>
            <person name="Squares R."/>
            <person name="Squares S."/>
            <person name="Woodward J."/>
            <person name="Parkhill J."/>
            <person name="Temple L.M."/>
        </authorList>
    </citation>
    <scope>NUCLEOTIDE SEQUENCE [LARGE SCALE GENOMIC DNA]</scope>
    <source>
        <strain>197N</strain>
    </source>
</reference>
<name>EFTS_BORA1</name>
<proteinExistence type="inferred from homology"/>